<feature type="chain" id="PRO_1000075269" description="Translation initiation factor IF-3">
    <location>
        <begin position="1"/>
        <end position="172"/>
    </location>
</feature>
<sequence>MTPTQKDGPRSNQDIRVPHVQLINDEGQHQGVVSIQEALAMAAEAGLDLVEIVPNAEPPVCKIIDLGKLKYQTQKKAAETRKKQKVIEIKEIKVRPNVDVHDYGVKLKAIHRFIDHGDKVKITLRFRGREMAHQDLGLKLLQRVKEDTSEIAKIELEPKLEGRQMMMVIAPK</sequence>
<name>IF3_BART1</name>
<accession>A9ILC8</accession>
<dbReference type="EMBL" id="AM260525">
    <property type="protein sequence ID" value="CAK00550.1"/>
    <property type="molecule type" value="Genomic_DNA"/>
</dbReference>
<dbReference type="RefSeq" id="WP_012230344.1">
    <property type="nucleotide sequence ID" value="NC_010161.1"/>
</dbReference>
<dbReference type="SMR" id="A9ILC8"/>
<dbReference type="KEGG" id="btr:BT_0048"/>
<dbReference type="eggNOG" id="COG0290">
    <property type="taxonomic scope" value="Bacteria"/>
</dbReference>
<dbReference type="HOGENOM" id="CLU_054919_3_2_5"/>
<dbReference type="Proteomes" id="UP000001592">
    <property type="component" value="Chromosome"/>
</dbReference>
<dbReference type="GO" id="GO:0005829">
    <property type="term" value="C:cytosol"/>
    <property type="evidence" value="ECO:0007669"/>
    <property type="project" value="TreeGrafter"/>
</dbReference>
<dbReference type="GO" id="GO:0016020">
    <property type="term" value="C:membrane"/>
    <property type="evidence" value="ECO:0007669"/>
    <property type="project" value="TreeGrafter"/>
</dbReference>
<dbReference type="GO" id="GO:0043022">
    <property type="term" value="F:ribosome binding"/>
    <property type="evidence" value="ECO:0007669"/>
    <property type="project" value="TreeGrafter"/>
</dbReference>
<dbReference type="GO" id="GO:0003743">
    <property type="term" value="F:translation initiation factor activity"/>
    <property type="evidence" value="ECO:0007669"/>
    <property type="project" value="UniProtKB-UniRule"/>
</dbReference>
<dbReference type="GO" id="GO:0032790">
    <property type="term" value="P:ribosome disassembly"/>
    <property type="evidence" value="ECO:0007669"/>
    <property type="project" value="TreeGrafter"/>
</dbReference>
<dbReference type="FunFam" id="3.30.110.10:FF:000001">
    <property type="entry name" value="Translation initiation factor IF-3"/>
    <property type="match status" value="1"/>
</dbReference>
<dbReference type="Gene3D" id="3.30.110.10">
    <property type="entry name" value="Translation initiation factor 3 (IF-3), C-terminal domain"/>
    <property type="match status" value="1"/>
</dbReference>
<dbReference type="Gene3D" id="3.10.20.80">
    <property type="entry name" value="Translation initiation factor 3 (IF-3), N-terminal domain"/>
    <property type="match status" value="1"/>
</dbReference>
<dbReference type="HAMAP" id="MF_00080">
    <property type="entry name" value="IF_3"/>
    <property type="match status" value="1"/>
</dbReference>
<dbReference type="InterPro" id="IPR036788">
    <property type="entry name" value="T_IF-3_C_sf"/>
</dbReference>
<dbReference type="InterPro" id="IPR036787">
    <property type="entry name" value="T_IF-3_N_sf"/>
</dbReference>
<dbReference type="InterPro" id="IPR001288">
    <property type="entry name" value="Translation_initiation_fac_3"/>
</dbReference>
<dbReference type="InterPro" id="IPR019815">
    <property type="entry name" value="Translation_initiation_fac_3_C"/>
</dbReference>
<dbReference type="InterPro" id="IPR019814">
    <property type="entry name" value="Translation_initiation_fac_3_N"/>
</dbReference>
<dbReference type="NCBIfam" id="TIGR00168">
    <property type="entry name" value="infC"/>
    <property type="match status" value="1"/>
</dbReference>
<dbReference type="PANTHER" id="PTHR10938">
    <property type="entry name" value="TRANSLATION INITIATION FACTOR IF-3"/>
    <property type="match status" value="1"/>
</dbReference>
<dbReference type="PANTHER" id="PTHR10938:SF0">
    <property type="entry name" value="TRANSLATION INITIATION FACTOR IF-3, MITOCHONDRIAL"/>
    <property type="match status" value="1"/>
</dbReference>
<dbReference type="Pfam" id="PF00707">
    <property type="entry name" value="IF3_C"/>
    <property type="match status" value="1"/>
</dbReference>
<dbReference type="Pfam" id="PF05198">
    <property type="entry name" value="IF3_N"/>
    <property type="match status" value="1"/>
</dbReference>
<dbReference type="SUPFAM" id="SSF55200">
    <property type="entry name" value="Translation initiation factor IF3, C-terminal domain"/>
    <property type="match status" value="1"/>
</dbReference>
<dbReference type="SUPFAM" id="SSF54364">
    <property type="entry name" value="Translation initiation factor IF3, N-terminal domain"/>
    <property type="match status" value="1"/>
</dbReference>
<proteinExistence type="inferred from homology"/>
<protein>
    <recommendedName>
        <fullName evidence="1">Translation initiation factor IF-3</fullName>
    </recommendedName>
</protein>
<organism>
    <name type="scientific">Bartonella tribocorum (strain CIP 105476 / IBS 506)</name>
    <dbReference type="NCBI Taxonomy" id="382640"/>
    <lineage>
        <taxon>Bacteria</taxon>
        <taxon>Pseudomonadati</taxon>
        <taxon>Pseudomonadota</taxon>
        <taxon>Alphaproteobacteria</taxon>
        <taxon>Hyphomicrobiales</taxon>
        <taxon>Bartonellaceae</taxon>
        <taxon>Bartonella</taxon>
    </lineage>
</organism>
<keyword id="KW-0963">Cytoplasm</keyword>
<keyword id="KW-0396">Initiation factor</keyword>
<keyword id="KW-0648">Protein biosynthesis</keyword>
<evidence type="ECO:0000255" key="1">
    <source>
        <dbReference type="HAMAP-Rule" id="MF_00080"/>
    </source>
</evidence>
<reference key="1">
    <citation type="journal article" date="2007" name="Nat. Genet.">
        <title>Genomic analysis of Bartonella identifies type IV secretion systems as host adaptability factors.</title>
        <authorList>
            <person name="Saenz H.L."/>
            <person name="Engel P."/>
            <person name="Stoeckli M.C."/>
            <person name="Lanz C."/>
            <person name="Raddatz G."/>
            <person name="Vayssier-Taussat M."/>
            <person name="Birtles R."/>
            <person name="Schuster S.C."/>
            <person name="Dehio C."/>
        </authorList>
    </citation>
    <scope>NUCLEOTIDE SEQUENCE [LARGE SCALE GENOMIC DNA]</scope>
    <source>
        <strain>CIP 105476 / IBS 506</strain>
    </source>
</reference>
<comment type="function">
    <text evidence="1">IF-3 binds to the 30S ribosomal subunit and shifts the equilibrium between 70S ribosomes and their 50S and 30S subunits in favor of the free subunits, thus enhancing the availability of 30S subunits on which protein synthesis initiation begins.</text>
</comment>
<comment type="subunit">
    <text evidence="1">Monomer.</text>
</comment>
<comment type="subcellular location">
    <subcellularLocation>
        <location evidence="1">Cytoplasm</location>
    </subcellularLocation>
</comment>
<comment type="similarity">
    <text evidence="1">Belongs to the IF-3 family.</text>
</comment>
<gene>
    <name evidence="1" type="primary">infC</name>
    <name type="ordered locus">BT_0048</name>
</gene>